<evidence type="ECO:0000255" key="1">
    <source>
        <dbReference type="HAMAP-Rule" id="MF_00735"/>
    </source>
</evidence>
<dbReference type="EC" id="2.1.1.-" evidence="1"/>
<dbReference type="EMBL" id="AE008923">
    <property type="protein sequence ID" value="AAM35415.1"/>
    <property type="molecule type" value="Genomic_DNA"/>
</dbReference>
<dbReference type="RefSeq" id="WP_005914154.1">
    <property type="nucleotide sequence ID" value="NC_003919.1"/>
</dbReference>
<dbReference type="SMR" id="Q8PQ06"/>
<dbReference type="GeneID" id="66909731"/>
<dbReference type="KEGG" id="xac:XAC0526"/>
<dbReference type="eggNOG" id="COG2264">
    <property type="taxonomic scope" value="Bacteria"/>
</dbReference>
<dbReference type="HOGENOM" id="CLU_049382_4_1_6"/>
<dbReference type="Proteomes" id="UP000000576">
    <property type="component" value="Chromosome"/>
</dbReference>
<dbReference type="GO" id="GO:0005829">
    <property type="term" value="C:cytosol"/>
    <property type="evidence" value="ECO:0007669"/>
    <property type="project" value="TreeGrafter"/>
</dbReference>
<dbReference type="GO" id="GO:0016279">
    <property type="term" value="F:protein-lysine N-methyltransferase activity"/>
    <property type="evidence" value="ECO:0007669"/>
    <property type="project" value="TreeGrafter"/>
</dbReference>
<dbReference type="GO" id="GO:0032259">
    <property type="term" value="P:methylation"/>
    <property type="evidence" value="ECO:0007669"/>
    <property type="project" value="UniProtKB-KW"/>
</dbReference>
<dbReference type="CDD" id="cd02440">
    <property type="entry name" value="AdoMet_MTases"/>
    <property type="match status" value="1"/>
</dbReference>
<dbReference type="Gene3D" id="3.40.50.150">
    <property type="entry name" value="Vaccinia Virus protein VP39"/>
    <property type="match status" value="1"/>
</dbReference>
<dbReference type="HAMAP" id="MF_00735">
    <property type="entry name" value="Methyltr_PrmA"/>
    <property type="match status" value="1"/>
</dbReference>
<dbReference type="InterPro" id="IPR050078">
    <property type="entry name" value="Ribosomal_L11_MeTrfase_PrmA"/>
</dbReference>
<dbReference type="InterPro" id="IPR004498">
    <property type="entry name" value="Ribosomal_PrmA_MeTrfase"/>
</dbReference>
<dbReference type="InterPro" id="IPR029063">
    <property type="entry name" value="SAM-dependent_MTases_sf"/>
</dbReference>
<dbReference type="NCBIfam" id="TIGR00406">
    <property type="entry name" value="prmA"/>
    <property type="match status" value="1"/>
</dbReference>
<dbReference type="PANTHER" id="PTHR43648">
    <property type="entry name" value="ELECTRON TRANSFER FLAVOPROTEIN BETA SUBUNIT LYSINE METHYLTRANSFERASE"/>
    <property type="match status" value="1"/>
</dbReference>
<dbReference type="PANTHER" id="PTHR43648:SF1">
    <property type="entry name" value="ELECTRON TRANSFER FLAVOPROTEIN BETA SUBUNIT LYSINE METHYLTRANSFERASE"/>
    <property type="match status" value="1"/>
</dbReference>
<dbReference type="Pfam" id="PF06325">
    <property type="entry name" value="PrmA"/>
    <property type="match status" value="1"/>
</dbReference>
<dbReference type="PIRSF" id="PIRSF000401">
    <property type="entry name" value="RPL11_MTase"/>
    <property type="match status" value="1"/>
</dbReference>
<dbReference type="SUPFAM" id="SSF53335">
    <property type="entry name" value="S-adenosyl-L-methionine-dependent methyltransferases"/>
    <property type="match status" value="1"/>
</dbReference>
<organism>
    <name type="scientific">Xanthomonas axonopodis pv. citri (strain 306)</name>
    <dbReference type="NCBI Taxonomy" id="190486"/>
    <lineage>
        <taxon>Bacteria</taxon>
        <taxon>Pseudomonadati</taxon>
        <taxon>Pseudomonadota</taxon>
        <taxon>Gammaproteobacteria</taxon>
        <taxon>Lysobacterales</taxon>
        <taxon>Lysobacteraceae</taxon>
        <taxon>Xanthomonas</taxon>
    </lineage>
</organism>
<proteinExistence type="inferred from homology"/>
<protein>
    <recommendedName>
        <fullName evidence="1">Ribosomal protein L11 methyltransferase</fullName>
        <shortName evidence="1">L11 Mtase</shortName>
        <ecNumber evidence="1">2.1.1.-</ecNumber>
    </recommendedName>
</protein>
<sequence>MPFLELTLSCSEVTLPRFQNALDDVGALAVTMLDADADTSNERAILEPGVGEMPLWDRLTMTALFDGDSDALVVLAALEAFDPGLDWSQVAFRMVEDSDWERAWMDLFKPMQFGERTFIVPWNHALPEAADTPEAAVVRLDPGLAFGSGTHQTTALCLRWLDSLAGSGELQGRSVLDFGCGSGILAVAALKLGATHAVGVDNDPQALLATADNAQRNGVDAQLAVYMPQDEPVQTYQVVVANILASALDALADTLAARVAPGGRIALSGILHGQEDDLLKRYAPWFEQLRCERDEDWMRIDGVRRG</sequence>
<feature type="chain" id="PRO_0000192335" description="Ribosomal protein L11 methyltransferase">
    <location>
        <begin position="1"/>
        <end position="306"/>
    </location>
</feature>
<feature type="binding site" evidence="1">
    <location>
        <position position="154"/>
    </location>
    <ligand>
        <name>S-adenosyl-L-methionine</name>
        <dbReference type="ChEBI" id="CHEBI:59789"/>
    </ligand>
</feature>
<feature type="binding site" evidence="1">
    <location>
        <position position="179"/>
    </location>
    <ligand>
        <name>S-adenosyl-L-methionine</name>
        <dbReference type="ChEBI" id="CHEBI:59789"/>
    </ligand>
</feature>
<feature type="binding site" evidence="1">
    <location>
        <position position="201"/>
    </location>
    <ligand>
        <name>S-adenosyl-L-methionine</name>
        <dbReference type="ChEBI" id="CHEBI:59789"/>
    </ligand>
</feature>
<feature type="binding site" evidence="1">
    <location>
        <position position="242"/>
    </location>
    <ligand>
        <name>S-adenosyl-L-methionine</name>
        <dbReference type="ChEBI" id="CHEBI:59789"/>
    </ligand>
</feature>
<comment type="function">
    <text evidence="1">Methylates ribosomal protein L11.</text>
</comment>
<comment type="catalytic activity">
    <reaction evidence="1">
        <text>L-lysyl-[protein] + 3 S-adenosyl-L-methionine = N(6),N(6),N(6)-trimethyl-L-lysyl-[protein] + 3 S-adenosyl-L-homocysteine + 3 H(+)</text>
        <dbReference type="Rhea" id="RHEA:54192"/>
        <dbReference type="Rhea" id="RHEA-COMP:9752"/>
        <dbReference type="Rhea" id="RHEA-COMP:13826"/>
        <dbReference type="ChEBI" id="CHEBI:15378"/>
        <dbReference type="ChEBI" id="CHEBI:29969"/>
        <dbReference type="ChEBI" id="CHEBI:57856"/>
        <dbReference type="ChEBI" id="CHEBI:59789"/>
        <dbReference type="ChEBI" id="CHEBI:61961"/>
    </reaction>
</comment>
<comment type="subcellular location">
    <subcellularLocation>
        <location evidence="1">Cytoplasm</location>
    </subcellularLocation>
</comment>
<comment type="similarity">
    <text evidence="1">Belongs to the methyltransferase superfamily. PrmA family.</text>
</comment>
<accession>Q8PQ06</accession>
<keyword id="KW-0963">Cytoplasm</keyword>
<keyword id="KW-0489">Methyltransferase</keyword>
<keyword id="KW-0949">S-adenosyl-L-methionine</keyword>
<keyword id="KW-0808">Transferase</keyword>
<reference key="1">
    <citation type="journal article" date="2002" name="Nature">
        <title>Comparison of the genomes of two Xanthomonas pathogens with differing host specificities.</title>
        <authorList>
            <person name="da Silva A.C.R."/>
            <person name="Ferro J.A."/>
            <person name="Reinach F.C."/>
            <person name="Farah C.S."/>
            <person name="Furlan L.R."/>
            <person name="Quaggio R.B."/>
            <person name="Monteiro-Vitorello C.B."/>
            <person name="Van Sluys M.A."/>
            <person name="Almeida N.F. Jr."/>
            <person name="Alves L.M.C."/>
            <person name="do Amaral A.M."/>
            <person name="Bertolini M.C."/>
            <person name="Camargo L.E.A."/>
            <person name="Camarotte G."/>
            <person name="Cannavan F."/>
            <person name="Cardozo J."/>
            <person name="Chambergo F."/>
            <person name="Ciapina L.P."/>
            <person name="Cicarelli R.M.B."/>
            <person name="Coutinho L.L."/>
            <person name="Cursino-Santos J.R."/>
            <person name="El-Dorry H."/>
            <person name="Faria J.B."/>
            <person name="Ferreira A.J.S."/>
            <person name="Ferreira R.C.C."/>
            <person name="Ferro M.I.T."/>
            <person name="Formighieri E.F."/>
            <person name="Franco M.C."/>
            <person name="Greggio C.C."/>
            <person name="Gruber A."/>
            <person name="Katsuyama A.M."/>
            <person name="Kishi L.T."/>
            <person name="Leite R.P."/>
            <person name="Lemos E.G.M."/>
            <person name="Lemos M.V.F."/>
            <person name="Locali E.C."/>
            <person name="Machado M.A."/>
            <person name="Madeira A.M.B.N."/>
            <person name="Martinez-Rossi N.M."/>
            <person name="Martins E.C."/>
            <person name="Meidanis J."/>
            <person name="Menck C.F.M."/>
            <person name="Miyaki C.Y."/>
            <person name="Moon D.H."/>
            <person name="Moreira L.M."/>
            <person name="Novo M.T.M."/>
            <person name="Okura V.K."/>
            <person name="Oliveira M.C."/>
            <person name="Oliveira V.R."/>
            <person name="Pereira H.A."/>
            <person name="Rossi A."/>
            <person name="Sena J.A.D."/>
            <person name="Silva C."/>
            <person name="de Souza R.F."/>
            <person name="Spinola L.A.F."/>
            <person name="Takita M.A."/>
            <person name="Tamura R.E."/>
            <person name="Teixeira E.C."/>
            <person name="Tezza R.I.D."/>
            <person name="Trindade dos Santos M."/>
            <person name="Truffi D."/>
            <person name="Tsai S.M."/>
            <person name="White F.F."/>
            <person name="Setubal J.C."/>
            <person name="Kitajima J.P."/>
        </authorList>
    </citation>
    <scope>NUCLEOTIDE SEQUENCE [LARGE SCALE GENOMIC DNA]</scope>
    <source>
        <strain>306</strain>
    </source>
</reference>
<name>PRMA_XANAC</name>
<gene>
    <name evidence="1" type="primary">prmA</name>
    <name type="ordered locus">XAC0526</name>
</gene>